<comment type="function">
    <text evidence="1">Involved in the gluconeogenesis. Catalyzes the conversion of oxaloacetate (OAA) to phosphoenolpyruvate (PEP) through direct phosphoryl transfer between the nucleoside triphosphate and OAA.</text>
</comment>
<comment type="catalytic activity">
    <reaction evidence="1">
        <text>oxaloacetate + ATP = phosphoenolpyruvate + ADP + CO2</text>
        <dbReference type="Rhea" id="RHEA:18617"/>
        <dbReference type="ChEBI" id="CHEBI:16452"/>
        <dbReference type="ChEBI" id="CHEBI:16526"/>
        <dbReference type="ChEBI" id="CHEBI:30616"/>
        <dbReference type="ChEBI" id="CHEBI:58702"/>
        <dbReference type="ChEBI" id="CHEBI:456216"/>
        <dbReference type="EC" id="4.1.1.49"/>
    </reaction>
</comment>
<comment type="cofactor">
    <cofactor evidence="1">
        <name>Mn(2+)</name>
        <dbReference type="ChEBI" id="CHEBI:29035"/>
    </cofactor>
    <text evidence="1">Binds 1 Mn(2+) ion per subunit.</text>
</comment>
<comment type="pathway">
    <text evidence="1">Carbohydrate biosynthesis; gluconeogenesis.</text>
</comment>
<comment type="subcellular location">
    <subcellularLocation>
        <location evidence="1">Cytoplasm</location>
    </subcellularLocation>
</comment>
<comment type="similarity">
    <text evidence="1">Belongs to the phosphoenolpyruvate carboxykinase (ATP) family.</text>
</comment>
<reference key="1">
    <citation type="journal article" date="2009" name="J. Bacteriol.">
        <title>Complete genome sequence of the extremophilic Bacillus cereus strain Q1 with industrial applications.</title>
        <authorList>
            <person name="Xiong Z."/>
            <person name="Jiang Y."/>
            <person name="Qi D."/>
            <person name="Lu H."/>
            <person name="Yang F."/>
            <person name="Yang J."/>
            <person name="Chen L."/>
            <person name="Sun L."/>
            <person name="Xu X."/>
            <person name="Xue Y."/>
            <person name="Zhu Y."/>
            <person name="Jin Q."/>
        </authorList>
    </citation>
    <scope>NUCLEOTIDE SEQUENCE [LARGE SCALE GENOMIC DNA]</scope>
    <source>
        <strain>Q1</strain>
    </source>
</reference>
<accession>B9J266</accession>
<evidence type="ECO:0000255" key="1">
    <source>
        <dbReference type="HAMAP-Rule" id="MF_00453"/>
    </source>
</evidence>
<sequence>MSTVNVQIGLHELLNGSNAQIQLSVPQLVEKVLMRNEGKLTSTGAVSASTGKYTGRSPKDKFIVKEASVADKIAWGAVNQPISEEHFNKLYTKVLEYLKEKEELFVFKGFAGADRNYRLPIQVINEYAWHNLFVHQLFIRPTEEELTTHESEFTIVSAPNFKADPAVDGTNSEAFIMVSFEKRIVLIGGTEYAGEMKKSIFSIMNFLLPEQDILSMHCSANVGEEGDVALFFGLSGTGKTTLSADPNRKLIGDDEHGWSDNGVFNIEGGCYAKCVNLSHEKEPQIFDAITFGSVLENVIINDQTRIADYNDTTLTENTRAAYPMHAIDNIVLPSVAGHPNTIIFLTADASGVLPPISKLSKEQAMYHFLSGYTSKLAGTERGVTSPQATFSTCFGSPFLPLDASRYAEMLGEKIEKHDAKVFLVNTGWTGGEYGVGKRMNLGYTRAMIQAALSGELAKTETAKHDIFGLEVPLHVPGVPDEVLMPEQTWADKAAYKAKAIELANEFKANFKKFDSVSEDIINLGGPIA</sequence>
<gene>
    <name evidence="1" type="primary">pckA</name>
    <name type="ordered locus">BCQ_4583</name>
</gene>
<keyword id="KW-0067">ATP-binding</keyword>
<keyword id="KW-0963">Cytoplasm</keyword>
<keyword id="KW-0210">Decarboxylase</keyword>
<keyword id="KW-0312">Gluconeogenesis</keyword>
<keyword id="KW-0456">Lyase</keyword>
<keyword id="KW-0464">Manganese</keyword>
<keyword id="KW-0479">Metal-binding</keyword>
<keyword id="KW-0547">Nucleotide-binding</keyword>
<dbReference type="EC" id="4.1.1.49" evidence="1"/>
<dbReference type="EMBL" id="CP000227">
    <property type="protein sequence ID" value="ACM15009.1"/>
    <property type="molecule type" value="Genomic_DNA"/>
</dbReference>
<dbReference type="SMR" id="B9J266"/>
<dbReference type="KEGG" id="bcq:BCQ_4583"/>
<dbReference type="HOGENOM" id="CLU_018247_0_1_9"/>
<dbReference type="UniPathway" id="UPA00138"/>
<dbReference type="Proteomes" id="UP000000441">
    <property type="component" value="Chromosome"/>
</dbReference>
<dbReference type="GO" id="GO:0005829">
    <property type="term" value="C:cytosol"/>
    <property type="evidence" value="ECO:0007669"/>
    <property type="project" value="TreeGrafter"/>
</dbReference>
<dbReference type="GO" id="GO:0005524">
    <property type="term" value="F:ATP binding"/>
    <property type="evidence" value="ECO:0007669"/>
    <property type="project" value="UniProtKB-UniRule"/>
</dbReference>
<dbReference type="GO" id="GO:0046872">
    <property type="term" value="F:metal ion binding"/>
    <property type="evidence" value="ECO:0007669"/>
    <property type="project" value="UniProtKB-KW"/>
</dbReference>
<dbReference type="GO" id="GO:0004612">
    <property type="term" value="F:phosphoenolpyruvate carboxykinase (ATP) activity"/>
    <property type="evidence" value="ECO:0007669"/>
    <property type="project" value="UniProtKB-UniRule"/>
</dbReference>
<dbReference type="GO" id="GO:0006094">
    <property type="term" value="P:gluconeogenesis"/>
    <property type="evidence" value="ECO:0007669"/>
    <property type="project" value="UniProtKB-UniRule"/>
</dbReference>
<dbReference type="CDD" id="cd00484">
    <property type="entry name" value="PEPCK_ATP"/>
    <property type="match status" value="1"/>
</dbReference>
<dbReference type="FunFam" id="2.170.8.10:FF:000001">
    <property type="entry name" value="Phosphoenolpyruvate carboxykinase (ATP)"/>
    <property type="match status" value="1"/>
</dbReference>
<dbReference type="FunFam" id="3.40.449.10:FF:000001">
    <property type="entry name" value="Phosphoenolpyruvate carboxykinase (ATP)"/>
    <property type="match status" value="1"/>
</dbReference>
<dbReference type="Gene3D" id="3.90.228.20">
    <property type="match status" value="1"/>
</dbReference>
<dbReference type="Gene3D" id="3.40.449.10">
    <property type="entry name" value="Phosphoenolpyruvate Carboxykinase, domain 1"/>
    <property type="match status" value="1"/>
</dbReference>
<dbReference type="Gene3D" id="2.170.8.10">
    <property type="entry name" value="Phosphoenolpyruvate Carboxykinase, domain 2"/>
    <property type="match status" value="1"/>
</dbReference>
<dbReference type="HAMAP" id="MF_00453">
    <property type="entry name" value="PEPCK_ATP"/>
    <property type="match status" value="1"/>
</dbReference>
<dbReference type="InterPro" id="IPR001272">
    <property type="entry name" value="PEP_carboxykinase_ATP"/>
</dbReference>
<dbReference type="InterPro" id="IPR013035">
    <property type="entry name" value="PEP_carboxykinase_C"/>
</dbReference>
<dbReference type="InterPro" id="IPR008210">
    <property type="entry name" value="PEP_carboxykinase_N"/>
</dbReference>
<dbReference type="InterPro" id="IPR015994">
    <property type="entry name" value="PEPCK_ATP_CS"/>
</dbReference>
<dbReference type="NCBIfam" id="TIGR00224">
    <property type="entry name" value="pckA"/>
    <property type="match status" value="1"/>
</dbReference>
<dbReference type="NCBIfam" id="NF006820">
    <property type="entry name" value="PRK09344.1-2"/>
    <property type="match status" value="1"/>
</dbReference>
<dbReference type="NCBIfam" id="NF006821">
    <property type="entry name" value="PRK09344.1-3"/>
    <property type="match status" value="1"/>
</dbReference>
<dbReference type="PANTHER" id="PTHR30031:SF0">
    <property type="entry name" value="PHOSPHOENOLPYRUVATE CARBOXYKINASE (ATP)"/>
    <property type="match status" value="1"/>
</dbReference>
<dbReference type="PANTHER" id="PTHR30031">
    <property type="entry name" value="PHOSPHOENOLPYRUVATE CARBOXYKINASE ATP"/>
    <property type="match status" value="1"/>
</dbReference>
<dbReference type="Pfam" id="PF01293">
    <property type="entry name" value="PEPCK_ATP"/>
    <property type="match status" value="1"/>
</dbReference>
<dbReference type="PIRSF" id="PIRSF006294">
    <property type="entry name" value="PEP_crbxkin"/>
    <property type="match status" value="1"/>
</dbReference>
<dbReference type="SUPFAM" id="SSF68923">
    <property type="entry name" value="PEP carboxykinase N-terminal domain"/>
    <property type="match status" value="1"/>
</dbReference>
<dbReference type="SUPFAM" id="SSF53795">
    <property type="entry name" value="PEP carboxykinase-like"/>
    <property type="match status" value="1"/>
</dbReference>
<dbReference type="PROSITE" id="PS00532">
    <property type="entry name" value="PEPCK_ATP"/>
    <property type="match status" value="1"/>
</dbReference>
<proteinExistence type="inferred from homology"/>
<feature type="chain" id="PRO_1000192310" description="Phosphoenolpyruvate carboxykinase (ATP)">
    <location>
        <begin position="1"/>
        <end position="528"/>
    </location>
</feature>
<feature type="binding site" evidence="1">
    <location>
        <position position="56"/>
    </location>
    <ligand>
        <name>substrate</name>
    </ligand>
</feature>
<feature type="binding site" evidence="1">
    <location>
        <position position="192"/>
    </location>
    <ligand>
        <name>substrate</name>
    </ligand>
</feature>
<feature type="binding site" evidence="1">
    <location>
        <position position="198"/>
    </location>
    <ligand>
        <name>ATP</name>
        <dbReference type="ChEBI" id="CHEBI:30616"/>
    </ligand>
</feature>
<feature type="binding site" evidence="1">
    <location>
        <position position="198"/>
    </location>
    <ligand>
        <name>Mn(2+)</name>
        <dbReference type="ChEBI" id="CHEBI:29035"/>
    </ligand>
</feature>
<feature type="binding site" evidence="1">
    <location>
        <position position="198"/>
    </location>
    <ligand>
        <name>substrate</name>
    </ligand>
</feature>
<feature type="binding site" evidence="1">
    <location>
        <position position="217"/>
    </location>
    <ligand>
        <name>ATP</name>
        <dbReference type="ChEBI" id="CHEBI:30616"/>
    </ligand>
</feature>
<feature type="binding site" evidence="1">
    <location>
        <position position="217"/>
    </location>
    <ligand>
        <name>Mn(2+)</name>
        <dbReference type="ChEBI" id="CHEBI:29035"/>
    </ligand>
</feature>
<feature type="binding site" evidence="1">
    <location>
        <begin position="233"/>
        <end position="241"/>
    </location>
    <ligand>
        <name>ATP</name>
        <dbReference type="ChEBI" id="CHEBI:30616"/>
    </ligand>
</feature>
<feature type="binding site" evidence="1">
    <location>
        <position position="254"/>
    </location>
    <ligand>
        <name>Mn(2+)</name>
        <dbReference type="ChEBI" id="CHEBI:29035"/>
    </ligand>
</feature>
<feature type="binding site" evidence="1">
    <location>
        <position position="282"/>
    </location>
    <ligand>
        <name>ATP</name>
        <dbReference type="ChEBI" id="CHEBI:30616"/>
    </ligand>
</feature>
<feature type="binding site" evidence="1">
    <location>
        <position position="319"/>
    </location>
    <ligand>
        <name>ATP</name>
        <dbReference type="ChEBI" id="CHEBI:30616"/>
    </ligand>
</feature>
<feature type="binding site" evidence="1">
    <location>
        <position position="319"/>
    </location>
    <ligand>
        <name>substrate</name>
    </ligand>
</feature>
<feature type="binding site" evidence="1">
    <location>
        <position position="444"/>
    </location>
    <ligand>
        <name>ATP</name>
        <dbReference type="ChEBI" id="CHEBI:30616"/>
    </ligand>
</feature>
<protein>
    <recommendedName>
        <fullName evidence="1">Phosphoenolpyruvate carboxykinase (ATP)</fullName>
        <shortName evidence="1">PCK</shortName>
        <shortName evidence="1">PEP carboxykinase</shortName>
        <shortName evidence="1">PEPCK</shortName>
        <ecNumber evidence="1">4.1.1.49</ecNumber>
    </recommendedName>
</protein>
<name>PCKA_BACCQ</name>
<organism>
    <name type="scientific">Bacillus cereus (strain Q1)</name>
    <dbReference type="NCBI Taxonomy" id="361100"/>
    <lineage>
        <taxon>Bacteria</taxon>
        <taxon>Bacillati</taxon>
        <taxon>Bacillota</taxon>
        <taxon>Bacilli</taxon>
        <taxon>Bacillales</taxon>
        <taxon>Bacillaceae</taxon>
        <taxon>Bacillus</taxon>
        <taxon>Bacillus cereus group</taxon>
    </lineage>
</organism>